<gene>
    <name evidence="1" type="primary">lepA</name>
    <name type="ordered locus">BamMC406_1012</name>
</gene>
<organism>
    <name type="scientific">Burkholderia ambifaria (strain MC40-6)</name>
    <dbReference type="NCBI Taxonomy" id="398577"/>
    <lineage>
        <taxon>Bacteria</taxon>
        <taxon>Pseudomonadati</taxon>
        <taxon>Pseudomonadota</taxon>
        <taxon>Betaproteobacteria</taxon>
        <taxon>Burkholderiales</taxon>
        <taxon>Burkholderiaceae</taxon>
        <taxon>Burkholderia</taxon>
        <taxon>Burkholderia cepacia complex</taxon>
    </lineage>
</organism>
<keyword id="KW-0997">Cell inner membrane</keyword>
<keyword id="KW-1003">Cell membrane</keyword>
<keyword id="KW-0342">GTP-binding</keyword>
<keyword id="KW-0378">Hydrolase</keyword>
<keyword id="KW-0472">Membrane</keyword>
<keyword id="KW-0547">Nucleotide-binding</keyword>
<keyword id="KW-0648">Protein biosynthesis</keyword>
<protein>
    <recommendedName>
        <fullName evidence="1">Elongation factor 4</fullName>
        <shortName evidence="1">EF-4</shortName>
        <ecNumber evidence="1">3.6.5.n1</ecNumber>
    </recommendedName>
    <alternativeName>
        <fullName evidence="1">Ribosomal back-translocase LepA</fullName>
    </alternativeName>
</protein>
<comment type="function">
    <text evidence="1">Required for accurate and efficient protein synthesis under certain stress conditions. May act as a fidelity factor of the translation reaction, by catalyzing a one-codon backward translocation of tRNAs on improperly translocated ribosomes. Back-translocation proceeds from a post-translocation (POST) complex to a pre-translocation (PRE) complex, thus giving elongation factor G a second chance to translocate the tRNAs correctly. Binds to ribosomes in a GTP-dependent manner.</text>
</comment>
<comment type="catalytic activity">
    <reaction evidence="1">
        <text>GTP + H2O = GDP + phosphate + H(+)</text>
        <dbReference type="Rhea" id="RHEA:19669"/>
        <dbReference type="ChEBI" id="CHEBI:15377"/>
        <dbReference type="ChEBI" id="CHEBI:15378"/>
        <dbReference type="ChEBI" id="CHEBI:37565"/>
        <dbReference type="ChEBI" id="CHEBI:43474"/>
        <dbReference type="ChEBI" id="CHEBI:58189"/>
        <dbReference type="EC" id="3.6.5.n1"/>
    </reaction>
</comment>
<comment type="subcellular location">
    <subcellularLocation>
        <location evidence="1">Cell inner membrane</location>
        <topology evidence="1">Peripheral membrane protein</topology>
        <orientation evidence="1">Cytoplasmic side</orientation>
    </subcellularLocation>
</comment>
<comment type="similarity">
    <text evidence="1">Belongs to the TRAFAC class translation factor GTPase superfamily. Classic translation factor GTPase family. LepA subfamily.</text>
</comment>
<dbReference type="EC" id="3.6.5.n1" evidence="1"/>
<dbReference type="EMBL" id="CP001025">
    <property type="protein sequence ID" value="ACB63503.1"/>
    <property type="molecule type" value="Genomic_DNA"/>
</dbReference>
<dbReference type="RefSeq" id="WP_006759775.1">
    <property type="nucleotide sequence ID" value="NC_010551.1"/>
</dbReference>
<dbReference type="SMR" id="B1YVM2"/>
<dbReference type="GeneID" id="93083583"/>
<dbReference type="KEGG" id="bac:BamMC406_1012"/>
<dbReference type="HOGENOM" id="CLU_009995_3_3_4"/>
<dbReference type="OrthoDB" id="9801472at2"/>
<dbReference type="Proteomes" id="UP000001680">
    <property type="component" value="Chromosome 1"/>
</dbReference>
<dbReference type="GO" id="GO:0005886">
    <property type="term" value="C:plasma membrane"/>
    <property type="evidence" value="ECO:0007669"/>
    <property type="project" value="UniProtKB-SubCell"/>
</dbReference>
<dbReference type="GO" id="GO:0005525">
    <property type="term" value="F:GTP binding"/>
    <property type="evidence" value="ECO:0007669"/>
    <property type="project" value="UniProtKB-UniRule"/>
</dbReference>
<dbReference type="GO" id="GO:0003924">
    <property type="term" value="F:GTPase activity"/>
    <property type="evidence" value="ECO:0007669"/>
    <property type="project" value="UniProtKB-UniRule"/>
</dbReference>
<dbReference type="GO" id="GO:0097216">
    <property type="term" value="F:guanosine tetraphosphate binding"/>
    <property type="evidence" value="ECO:0007669"/>
    <property type="project" value="UniProtKB-ARBA"/>
</dbReference>
<dbReference type="GO" id="GO:0043022">
    <property type="term" value="F:ribosome binding"/>
    <property type="evidence" value="ECO:0007669"/>
    <property type="project" value="UniProtKB-UniRule"/>
</dbReference>
<dbReference type="GO" id="GO:0003746">
    <property type="term" value="F:translation elongation factor activity"/>
    <property type="evidence" value="ECO:0007669"/>
    <property type="project" value="UniProtKB-UniRule"/>
</dbReference>
<dbReference type="GO" id="GO:0045727">
    <property type="term" value="P:positive regulation of translation"/>
    <property type="evidence" value="ECO:0007669"/>
    <property type="project" value="UniProtKB-UniRule"/>
</dbReference>
<dbReference type="CDD" id="cd03699">
    <property type="entry name" value="EF4_II"/>
    <property type="match status" value="1"/>
</dbReference>
<dbReference type="CDD" id="cd16260">
    <property type="entry name" value="EF4_III"/>
    <property type="match status" value="1"/>
</dbReference>
<dbReference type="CDD" id="cd01890">
    <property type="entry name" value="LepA"/>
    <property type="match status" value="1"/>
</dbReference>
<dbReference type="CDD" id="cd03709">
    <property type="entry name" value="lepA_C"/>
    <property type="match status" value="1"/>
</dbReference>
<dbReference type="FunFam" id="3.40.50.300:FF:000078">
    <property type="entry name" value="Elongation factor 4"/>
    <property type="match status" value="1"/>
</dbReference>
<dbReference type="FunFam" id="2.40.30.10:FF:000015">
    <property type="entry name" value="Translation factor GUF1, mitochondrial"/>
    <property type="match status" value="1"/>
</dbReference>
<dbReference type="FunFam" id="3.30.70.240:FF:000007">
    <property type="entry name" value="Translation factor GUF1, mitochondrial"/>
    <property type="match status" value="1"/>
</dbReference>
<dbReference type="FunFam" id="3.30.70.2570:FF:000001">
    <property type="entry name" value="Translation factor GUF1, mitochondrial"/>
    <property type="match status" value="1"/>
</dbReference>
<dbReference type="FunFam" id="3.30.70.870:FF:000004">
    <property type="entry name" value="Translation factor GUF1, mitochondrial"/>
    <property type="match status" value="1"/>
</dbReference>
<dbReference type="Gene3D" id="3.30.70.240">
    <property type="match status" value="1"/>
</dbReference>
<dbReference type="Gene3D" id="3.30.70.2570">
    <property type="entry name" value="Elongation factor 4, C-terminal domain"/>
    <property type="match status" value="1"/>
</dbReference>
<dbReference type="Gene3D" id="3.30.70.870">
    <property type="entry name" value="Elongation Factor G (Translational Gtpase), domain 3"/>
    <property type="match status" value="1"/>
</dbReference>
<dbReference type="Gene3D" id="3.40.50.300">
    <property type="entry name" value="P-loop containing nucleotide triphosphate hydrolases"/>
    <property type="match status" value="1"/>
</dbReference>
<dbReference type="Gene3D" id="2.40.30.10">
    <property type="entry name" value="Translation factors"/>
    <property type="match status" value="1"/>
</dbReference>
<dbReference type="HAMAP" id="MF_00071">
    <property type="entry name" value="LepA"/>
    <property type="match status" value="1"/>
</dbReference>
<dbReference type="InterPro" id="IPR006297">
    <property type="entry name" value="EF-4"/>
</dbReference>
<dbReference type="InterPro" id="IPR035647">
    <property type="entry name" value="EFG_III/V"/>
</dbReference>
<dbReference type="InterPro" id="IPR000640">
    <property type="entry name" value="EFG_V-like"/>
</dbReference>
<dbReference type="InterPro" id="IPR004161">
    <property type="entry name" value="EFTu-like_2"/>
</dbReference>
<dbReference type="InterPro" id="IPR031157">
    <property type="entry name" value="G_TR_CS"/>
</dbReference>
<dbReference type="InterPro" id="IPR038363">
    <property type="entry name" value="LepA_C_sf"/>
</dbReference>
<dbReference type="InterPro" id="IPR013842">
    <property type="entry name" value="LepA_CTD"/>
</dbReference>
<dbReference type="InterPro" id="IPR035654">
    <property type="entry name" value="LepA_IV"/>
</dbReference>
<dbReference type="InterPro" id="IPR027417">
    <property type="entry name" value="P-loop_NTPase"/>
</dbReference>
<dbReference type="InterPro" id="IPR005225">
    <property type="entry name" value="Small_GTP-bd"/>
</dbReference>
<dbReference type="InterPro" id="IPR000795">
    <property type="entry name" value="T_Tr_GTP-bd_dom"/>
</dbReference>
<dbReference type="InterPro" id="IPR009000">
    <property type="entry name" value="Transl_B-barrel_sf"/>
</dbReference>
<dbReference type="NCBIfam" id="TIGR01393">
    <property type="entry name" value="lepA"/>
    <property type="match status" value="1"/>
</dbReference>
<dbReference type="NCBIfam" id="TIGR00231">
    <property type="entry name" value="small_GTP"/>
    <property type="match status" value="1"/>
</dbReference>
<dbReference type="PANTHER" id="PTHR43512:SF4">
    <property type="entry name" value="TRANSLATION FACTOR GUF1 HOMOLOG, CHLOROPLASTIC"/>
    <property type="match status" value="1"/>
</dbReference>
<dbReference type="PANTHER" id="PTHR43512">
    <property type="entry name" value="TRANSLATION FACTOR GUF1-RELATED"/>
    <property type="match status" value="1"/>
</dbReference>
<dbReference type="Pfam" id="PF00679">
    <property type="entry name" value="EFG_C"/>
    <property type="match status" value="1"/>
</dbReference>
<dbReference type="Pfam" id="PF00009">
    <property type="entry name" value="GTP_EFTU"/>
    <property type="match status" value="1"/>
</dbReference>
<dbReference type="Pfam" id="PF03144">
    <property type="entry name" value="GTP_EFTU_D2"/>
    <property type="match status" value="1"/>
</dbReference>
<dbReference type="Pfam" id="PF06421">
    <property type="entry name" value="LepA_C"/>
    <property type="match status" value="1"/>
</dbReference>
<dbReference type="PRINTS" id="PR00315">
    <property type="entry name" value="ELONGATNFCT"/>
</dbReference>
<dbReference type="SMART" id="SM00838">
    <property type="entry name" value="EFG_C"/>
    <property type="match status" value="1"/>
</dbReference>
<dbReference type="SUPFAM" id="SSF54980">
    <property type="entry name" value="EF-G C-terminal domain-like"/>
    <property type="match status" value="2"/>
</dbReference>
<dbReference type="SUPFAM" id="SSF52540">
    <property type="entry name" value="P-loop containing nucleoside triphosphate hydrolases"/>
    <property type="match status" value="1"/>
</dbReference>
<dbReference type="SUPFAM" id="SSF50447">
    <property type="entry name" value="Translation proteins"/>
    <property type="match status" value="1"/>
</dbReference>
<dbReference type="PROSITE" id="PS00301">
    <property type="entry name" value="G_TR_1"/>
    <property type="match status" value="1"/>
</dbReference>
<dbReference type="PROSITE" id="PS51722">
    <property type="entry name" value="G_TR_2"/>
    <property type="match status" value="1"/>
</dbReference>
<reference key="1">
    <citation type="submission" date="2008-04" db="EMBL/GenBank/DDBJ databases">
        <title>Complete sequence of chromosome 1 of Burkholderia ambifaria MC40-6.</title>
        <authorList>
            <person name="Copeland A."/>
            <person name="Lucas S."/>
            <person name="Lapidus A."/>
            <person name="Glavina del Rio T."/>
            <person name="Dalin E."/>
            <person name="Tice H."/>
            <person name="Pitluck S."/>
            <person name="Chain P."/>
            <person name="Malfatti S."/>
            <person name="Shin M."/>
            <person name="Vergez L."/>
            <person name="Lang D."/>
            <person name="Schmutz J."/>
            <person name="Larimer F."/>
            <person name="Land M."/>
            <person name="Hauser L."/>
            <person name="Kyrpides N."/>
            <person name="Lykidis A."/>
            <person name="Ramette A."/>
            <person name="Konstantinidis K."/>
            <person name="Tiedje J."/>
            <person name="Richardson P."/>
        </authorList>
    </citation>
    <scope>NUCLEOTIDE SEQUENCE [LARGE SCALE GENOMIC DNA]</scope>
    <source>
        <strain>MC40-6</strain>
    </source>
</reference>
<proteinExistence type="inferred from homology"/>
<evidence type="ECO:0000255" key="1">
    <source>
        <dbReference type="HAMAP-Rule" id="MF_00071"/>
    </source>
</evidence>
<sequence length="597" mass="65967">MDHIRNFSIIAHIDHGKSTLADRIIQVCGGLADREMEAQVLDSMDIERERGITIKAQTAALSYRARDGKVYNLNLIDTPGHVDFSYEVSRSLSACEGALLVVDASQGVEAQTVANCYTAIELGVEVVPVLNKIDLPAANPENAIEEIEDVIGIDATDATRCSAKTGLGVEDVLESLIAKVPPPKGDPAAPLQALIIDSWFDNYVGVVMLVRIVNGTLRPKEKIKMMATGAQYPVEHVGVFTPKSRNLESLSAGQVGFIIAGIKELTAAKVGDTVTHVAKAASEPLPGFKEVKPQVFAGLYPVEANQYDALRESLEKLKLNDASLQYEPEVSQALGFGFRCGFLGLLHMEIVQERLEREFDMDLITTAPTVVYEVVQSDGSTIMVENPAKMPEPGRIAEVREPIVTVNLYMPQDYVGSVITLCEQKRGSQINMQYHGRQVQLTYEIPMAEIVLDFFDRLKSVSRGYASMDYEFKEYRSSDVVKVDMLINGDKVDALSIIVHRSQSQYRGREVAAKMREIIPRQMYDVAIQAAIGAHIVARENIKALRKNVLAKCYGGDITRKKKLLEKQKEGKKRMKQVGSVEIPQEAFLAILRVEDK</sequence>
<name>LEPA_BURA4</name>
<feature type="chain" id="PRO_1000092376" description="Elongation factor 4">
    <location>
        <begin position="1"/>
        <end position="597"/>
    </location>
</feature>
<feature type="domain" description="tr-type G">
    <location>
        <begin position="2"/>
        <end position="184"/>
    </location>
</feature>
<feature type="binding site" evidence="1">
    <location>
        <begin position="14"/>
        <end position="19"/>
    </location>
    <ligand>
        <name>GTP</name>
        <dbReference type="ChEBI" id="CHEBI:37565"/>
    </ligand>
</feature>
<feature type="binding site" evidence="1">
    <location>
        <begin position="131"/>
        <end position="134"/>
    </location>
    <ligand>
        <name>GTP</name>
        <dbReference type="ChEBI" id="CHEBI:37565"/>
    </ligand>
</feature>
<accession>B1YVM2</accession>